<comment type="function">
    <text evidence="1">Hydrolyzes the pyrophosphate bond of UDP-2,3-diacylglucosamine to yield 2,3-diacylglucosamine 1-phosphate (lipid X) and UMP by catalyzing the attack of water at the alpha-P atom. Involved in the biosynthesis of lipid A, a phosphorylated glycolipid that anchors the lipopolysaccharide to the outer membrane of the cell.</text>
</comment>
<comment type="catalytic activity">
    <reaction evidence="1">
        <text>UDP-2-N,3-O-bis[(3R)-3-hydroxytetradecanoyl]-alpha-D-glucosamine + H2O = 2-N,3-O-bis[(3R)-3-hydroxytetradecanoyl]-alpha-D-glucosaminyl 1-phosphate + UMP + 2 H(+)</text>
        <dbReference type="Rhea" id="RHEA:25213"/>
        <dbReference type="ChEBI" id="CHEBI:15377"/>
        <dbReference type="ChEBI" id="CHEBI:15378"/>
        <dbReference type="ChEBI" id="CHEBI:57865"/>
        <dbReference type="ChEBI" id="CHEBI:57957"/>
        <dbReference type="ChEBI" id="CHEBI:78847"/>
        <dbReference type="EC" id="3.6.1.54"/>
    </reaction>
</comment>
<comment type="cofactor">
    <cofactor evidence="1">
        <name>Mn(2+)</name>
        <dbReference type="ChEBI" id="CHEBI:29035"/>
    </cofactor>
    <text evidence="1">Binds 2 Mn(2+) ions per subunit in a binuclear metal center.</text>
</comment>
<comment type="pathway">
    <text evidence="1">Glycolipid biosynthesis; lipid IV(A) biosynthesis; lipid IV(A) from (3R)-3-hydroxytetradecanoyl-[acyl-carrier-protein] and UDP-N-acetyl-alpha-D-glucosamine: step 4/6.</text>
</comment>
<comment type="subcellular location">
    <subcellularLocation>
        <location evidence="1">Cell inner membrane</location>
        <topology evidence="1">Peripheral membrane protein</topology>
        <orientation evidence="1">Cytoplasmic side</orientation>
    </subcellularLocation>
</comment>
<comment type="similarity">
    <text evidence="1">Belongs to the LpxH family.</text>
</comment>
<sequence>MILLISDLHLEQERPDITRAFLALLAGRARTAEALYILGDFFEAWIGDDAMSPFQRSICQALRELSDSGTRIFLMHGNRDFMLGKGFCKAAGCTLLSDPSVVQLNGEPVLLMHGDSLCTRDEGYMRMRRYLRHPLTLFILRHLPLSTRHKLARKLRNESRAQTRMKANDIVDVTPDEVPRIMQQFGVRTLVHGHTHRPAIHKLQIGDQSAKRIVLGDWDRQGWVLQVDEQGMNLGSFDFVPETVALLN</sequence>
<name>LPXH_PSESM</name>
<evidence type="ECO:0000255" key="1">
    <source>
        <dbReference type="HAMAP-Rule" id="MF_00575"/>
    </source>
</evidence>
<keyword id="KW-0997">Cell inner membrane</keyword>
<keyword id="KW-1003">Cell membrane</keyword>
<keyword id="KW-0378">Hydrolase</keyword>
<keyword id="KW-0441">Lipid A biosynthesis</keyword>
<keyword id="KW-0444">Lipid biosynthesis</keyword>
<keyword id="KW-0443">Lipid metabolism</keyword>
<keyword id="KW-0464">Manganese</keyword>
<keyword id="KW-0472">Membrane</keyword>
<keyword id="KW-0479">Metal-binding</keyword>
<keyword id="KW-1185">Reference proteome</keyword>
<gene>
    <name evidence="1" type="primary">lpxH</name>
    <name type="ordered locus">PSPTO_3745</name>
</gene>
<feature type="chain" id="PRO_0000214119" description="UDP-2,3-diacylglucosamine hydrolase">
    <location>
        <begin position="1"/>
        <end position="248"/>
    </location>
</feature>
<feature type="binding site" evidence="1">
    <location>
        <position position="7"/>
    </location>
    <ligand>
        <name>Mn(2+)</name>
        <dbReference type="ChEBI" id="CHEBI:29035"/>
        <label>1</label>
    </ligand>
</feature>
<feature type="binding site" evidence="1">
    <location>
        <position position="9"/>
    </location>
    <ligand>
        <name>Mn(2+)</name>
        <dbReference type="ChEBI" id="CHEBI:29035"/>
        <label>1</label>
    </ligand>
</feature>
<feature type="binding site" evidence="1">
    <location>
        <position position="40"/>
    </location>
    <ligand>
        <name>Mn(2+)</name>
        <dbReference type="ChEBI" id="CHEBI:29035"/>
        <label>1</label>
    </ligand>
</feature>
<feature type="binding site" evidence="1">
    <location>
        <position position="40"/>
    </location>
    <ligand>
        <name>Mn(2+)</name>
        <dbReference type="ChEBI" id="CHEBI:29035"/>
        <label>2</label>
    </ligand>
</feature>
<feature type="binding site" evidence="1">
    <location>
        <begin position="78"/>
        <end position="79"/>
    </location>
    <ligand>
        <name>substrate</name>
    </ligand>
</feature>
<feature type="binding site" evidence="1">
    <location>
        <position position="78"/>
    </location>
    <ligand>
        <name>Mn(2+)</name>
        <dbReference type="ChEBI" id="CHEBI:29035"/>
        <label>2</label>
    </ligand>
</feature>
<feature type="binding site" evidence="1">
    <location>
        <position position="113"/>
    </location>
    <ligand>
        <name>Mn(2+)</name>
        <dbReference type="ChEBI" id="CHEBI:29035"/>
        <label>2</label>
    </ligand>
</feature>
<feature type="binding site" evidence="1">
    <location>
        <position position="121"/>
    </location>
    <ligand>
        <name>substrate</name>
    </ligand>
</feature>
<feature type="binding site" evidence="1">
    <location>
        <position position="159"/>
    </location>
    <ligand>
        <name>substrate</name>
    </ligand>
</feature>
<feature type="binding site" evidence="1">
    <location>
        <position position="163"/>
    </location>
    <ligand>
        <name>substrate</name>
    </ligand>
</feature>
<feature type="binding site" evidence="1">
    <location>
        <position position="166"/>
    </location>
    <ligand>
        <name>substrate</name>
    </ligand>
</feature>
<feature type="binding site" evidence="1">
    <location>
        <position position="194"/>
    </location>
    <ligand>
        <name>Mn(2+)</name>
        <dbReference type="ChEBI" id="CHEBI:29035"/>
        <label>2</label>
    </ligand>
</feature>
<feature type="binding site" evidence="1">
    <location>
        <position position="194"/>
    </location>
    <ligand>
        <name>substrate</name>
    </ligand>
</feature>
<feature type="binding site" evidence="1">
    <location>
        <position position="196"/>
    </location>
    <ligand>
        <name>Mn(2+)</name>
        <dbReference type="ChEBI" id="CHEBI:29035"/>
        <label>1</label>
    </ligand>
</feature>
<proteinExistence type="inferred from homology"/>
<reference key="1">
    <citation type="journal article" date="2003" name="Proc. Natl. Acad. Sci. U.S.A.">
        <title>The complete genome sequence of the Arabidopsis and tomato pathogen Pseudomonas syringae pv. tomato DC3000.</title>
        <authorList>
            <person name="Buell C.R."/>
            <person name="Joardar V."/>
            <person name="Lindeberg M."/>
            <person name="Selengut J."/>
            <person name="Paulsen I.T."/>
            <person name="Gwinn M.L."/>
            <person name="Dodson R.J."/>
            <person name="DeBoy R.T."/>
            <person name="Durkin A.S."/>
            <person name="Kolonay J.F."/>
            <person name="Madupu R."/>
            <person name="Daugherty S.C."/>
            <person name="Brinkac L.M."/>
            <person name="Beanan M.J."/>
            <person name="Haft D.H."/>
            <person name="Nelson W.C."/>
            <person name="Davidsen T.M."/>
            <person name="Zafar N."/>
            <person name="Zhou L."/>
            <person name="Liu J."/>
            <person name="Yuan Q."/>
            <person name="Khouri H.M."/>
            <person name="Fedorova N.B."/>
            <person name="Tran B."/>
            <person name="Russell D."/>
            <person name="Berry K.J."/>
            <person name="Utterback T.R."/>
            <person name="Van Aken S.E."/>
            <person name="Feldblyum T.V."/>
            <person name="D'Ascenzo M."/>
            <person name="Deng W.-L."/>
            <person name="Ramos A.R."/>
            <person name="Alfano J.R."/>
            <person name="Cartinhour S."/>
            <person name="Chatterjee A.K."/>
            <person name="Delaney T.P."/>
            <person name="Lazarowitz S.G."/>
            <person name="Martin G.B."/>
            <person name="Schneider D.J."/>
            <person name="Tang X."/>
            <person name="Bender C.L."/>
            <person name="White O."/>
            <person name="Fraser C.M."/>
            <person name="Collmer A."/>
        </authorList>
    </citation>
    <scope>NUCLEOTIDE SEQUENCE [LARGE SCALE GENOMIC DNA]</scope>
    <source>
        <strain>ATCC BAA-871 / DC3000</strain>
    </source>
</reference>
<accession>Q87YP9</accession>
<dbReference type="EC" id="3.6.1.54" evidence="1"/>
<dbReference type="EMBL" id="AE016853">
    <property type="protein sequence ID" value="AAO57214.1"/>
    <property type="molecule type" value="Genomic_DNA"/>
</dbReference>
<dbReference type="RefSeq" id="NP_793519.1">
    <property type="nucleotide sequence ID" value="NC_004578.1"/>
</dbReference>
<dbReference type="RefSeq" id="WP_005769188.1">
    <property type="nucleotide sequence ID" value="NC_004578.1"/>
</dbReference>
<dbReference type="SMR" id="Q87YP9"/>
<dbReference type="STRING" id="223283.PSPTO_3745"/>
<dbReference type="GeneID" id="1185413"/>
<dbReference type="KEGG" id="pst:PSPTO_3745"/>
<dbReference type="PATRIC" id="fig|223283.9.peg.3837"/>
<dbReference type="eggNOG" id="COG2908">
    <property type="taxonomic scope" value="Bacteria"/>
</dbReference>
<dbReference type="HOGENOM" id="CLU_074586_0_0_6"/>
<dbReference type="OrthoDB" id="9783283at2"/>
<dbReference type="PhylomeDB" id="Q87YP9"/>
<dbReference type="UniPathway" id="UPA00359">
    <property type="reaction ID" value="UER00480"/>
</dbReference>
<dbReference type="Proteomes" id="UP000002515">
    <property type="component" value="Chromosome"/>
</dbReference>
<dbReference type="GO" id="GO:0005737">
    <property type="term" value="C:cytoplasm"/>
    <property type="evidence" value="ECO:0007669"/>
    <property type="project" value="InterPro"/>
</dbReference>
<dbReference type="GO" id="GO:0019897">
    <property type="term" value="C:extrinsic component of plasma membrane"/>
    <property type="evidence" value="ECO:0007669"/>
    <property type="project" value="UniProtKB-UniRule"/>
</dbReference>
<dbReference type="GO" id="GO:0030145">
    <property type="term" value="F:manganese ion binding"/>
    <property type="evidence" value="ECO:0007669"/>
    <property type="project" value="UniProtKB-UniRule"/>
</dbReference>
<dbReference type="GO" id="GO:0008758">
    <property type="term" value="F:UDP-2,3-diacylglucosamine hydrolase activity"/>
    <property type="evidence" value="ECO:0007669"/>
    <property type="project" value="UniProtKB-UniRule"/>
</dbReference>
<dbReference type="GO" id="GO:0009245">
    <property type="term" value="P:lipid A biosynthetic process"/>
    <property type="evidence" value="ECO:0007669"/>
    <property type="project" value="UniProtKB-UniRule"/>
</dbReference>
<dbReference type="CDD" id="cd07398">
    <property type="entry name" value="MPP_YbbF-LpxH"/>
    <property type="match status" value="1"/>
</dbReference>
<dbReference type="Gene3D" id="3.60.21.10">
    <property type="match status" value="1"/>
</dbReference>
<dbReference type="HAMAP" id="MF_00575">
    <property type="entry name" value="LpxH"/>
    <property type="match status" value="1"/>
</dbReference>
<dbReference type="InterPro" id="IPR004843">
    <property type="entry name" value="Calcineurin-like_PHP_ApaH"/>
</dbReference>
<dbReference type="InterPro" id="IPR043461">
    <property type="entry name" value="LpxH-like"/>
</dbReference>
<dbReference type="InterPro" id="IPR029052">
    <property type="entry name" value="Metallo-depent_PP-like"/>
</dbReference>
<dbReference type="InterPro" id="IPR010138">
    <property type="entry name" value="UDP-diacylglucosamine_Hdrlase"/>
</dbReference>
<dbReference type="NCBIfam" id="TIGR01854">
    <property type="entry name" value="lipid_A_lpxH"/>
    <property type="match status" value="1"/>
</dbReference>
<dbReference type="NCBIfam" id="NF003743">
    <property type="entry name" value="PRK05340.1"/>
    <property type="match status" value="1"/>
</dbReference>
<dbReference type="PANTHER" id="PTHR34990:SF1">
    <property type="entry name" value="UDP-2,3-DIACYLGLUCOSAMINE HYDROLASE"/>
    <property type="match status" value="1"/>
</dbReference>
<dbReference type="PANTHER" id="PTHR34990">
    <property type="entry name" value="UDP-2,3-DIACYLGLUCOSAMINE HYDROLASE-RELATED"/>
    <property type="match status" value="1"/>
</dbReference>
<dbReference type="Pfam" id="PF00149">
    <property type="entry name" value="Metallophos"/>
    <property type="match status" value="1"/>
</dbReference>
<dbReference type="SUPFAM" id="SSF56300">
    <property type="entry name" value="Metallo-dependent phosphatases"/>
    <property type="match status" value="1"/>
</dbReference>
<protein>
    <recommendedName>
        <fullName evidence="1">UDP-2,3-diacylglucosamine hydrolase</fullName>
        <ecNumber evidence="1">3.6.1.54</ecNumber>
    </recommendedName>
    <alternativeName>
        <fullName evidence="1">UDP-2,3-diacylglucosamine diphosphatase</fullName>
    </alternativeName>
</protein>
<organism>
    <name type="scientific">Pseudomonas syringae pv. tomato (strain ATCC BAA-871 / DC3000)</name>
    <dbReference type="NCBI Taxonomy" id="223283"/>
    <lineage>
        <taxon>Bacteria</taxon>
        <taxon>Pseudomonadati</taxon>
        <taxon>Pseudomonadota</taxon>
        <taxon>Gammaproteobacteria</taxon>
        <taxon>Pseudomonadales</taxon>
        <taxon>Pseudomonadaceae</taxon>
        <taxon>Pseudomonas</taxon>
    </lineage>
</organism>